<name>SYL_ECO45</name>
<gene>
    <name evidence="1" type="primary">leuS</name>
    <name type="ordered locus">ECS88_0684</name>
</gene>
<comment type="catalytic activity">
    <reaction evidence="1">
        <text>tRNA(Leu) + L-leucine + ATP = L-leucyl-tRNA(Leu) + AMP + diphosphate</text>
        <dbReference type="Rhea" id="RHEA:11688"/>
        <dbReference type="Rhea" id="RHEA-COMP:9613"/>
        <dbReference type="Rhea" id="RHEA-COMP:9622"/>
        <dbReference type="ChEBI" id="CHEBI:30616"/>
        <dbReference type="ChEBI" id="CHEBI:33019"/>
        <dbReference type="ChEBI" id="CHEBI:57427"/>
        <dbReference type="ChEBI" id="CHEBI:78442"/>
        <dbReference type="ChEBI" id="CHEBI:78494"/>
        <dbReference type="ChEBI" id="CHEBI:456215"/>
        <dbReference type="EC" id="6.1.1.4"/>
    </reaction>
</comment>
<comment type="subcellular location">
    <subcellularLocation>
        <location evidence="1">Cytoplasm</location>
    </subcellularLocation>
</comment>
<comment type="similarity">
    <text evidence="1">Belongs to the class-I aminoacyl-tRNA synthetase family.</text>
</comment>
<reference key="1">
    <citation type="journal article" date="2009" name="PLoS Genet.">
        <title>Organised genome dynamics in the Escherichia coli species results in highly diverse adaptive paths.</title>
        <authorList>
            <person name="Touchon M."/>
            <person name="Hoede C."/>
            <person name="Tenaillon O."/>
            <person name="Barbe V."/>
            <person name="Baeriswyl S."/>
            <person name="Bidet P."/>
            <person name="Bingen E."/>
            <person name="Bonacorsi S."/>
            <person name="Bouchier C."/>
            <person name="Bouvet O."/>
            <person name="Calteau A."/>
            <person name="Chiapello H."/>
            <person name="Clermont O."/>
            <person name="Cruveiller S."/>
            <person name="Danchin A."/>
            <person name="Diard M."/>
            <person name="Dossat C."/>
            <person name="Karoui M.E."/>
            <person name="Frapy E."/>
            <person name="Garry L."/>
            <person name="Ghigo J.M."/>
            <person name="Gilles A.M."/>
            <person name="Johnson J."/>
            <person name="Le Bouguenec C."/>
            <person name="Lescat M."/>
            <person name="Mangenot S."/>
            <person name="Martinez-Jehanne V."/>
            <person name="Matic I."/>
            <person name="Nassif X."/>
            <person name="Oztas S."/>
            <person name="Petit M.A."/>
            <person name="Pichon C."/>
            <person name="Rouy Z."/>
            <person name="Ruf C.S."/>
            <person name="Schneider D."/>
            <person name="Tourret J."/>
            <person name="Vacherie B."/>
            <person name="Vallenet D."/>
            <person name="Medigue C."/>
            <person name="Rocha E.P.C."/>
            <person name="Denamur E."/>
        </authorList>
    </citation>
    <scope>NUCLEOTIDE SEQUENCE [LARGE SCALE GENOMIC DNA]</scope>
    <source>
        <strain>S88 / ExPEC</strain>
    </source>
</reference>
<evidence type="ECO:0000255" key="1">
    <source>
        <dbReference type="HAMAP-Rule" id="MF_00049"/>
    </source>
</evidence>
<dbReference type="EC" id="6.1.1.4" evidence="1"/>
<dbReference type="EMBL" id="CU928161">
    <property type="protein sequence ID" value="CAR02024.1"/>
    <property type="molecule type" value="Genomic_DNA"/>
</dbReference>
<dbReference type="RefSeq" id="WP_001362899.1">
    <property type="nucleotide sequence ID" value="NC_011742.1"/>
</dbReference>
<dbReference type="SMR" id="B7MFR5"/>
<dbReference type="KEGG" id="ecz:ECS88_0684"/>
<dbReference type="HOGENOM" id="CLU_004427_0_0_6"/>
<dbReference type="Proteomes" id="UP000000747">
    <property type="component" value="Chromosome"/>
</dbReference>
<dbReference type="GO" id="GO:0005829">
    <property type="term" value="C:cytosol"/>
    <property type="evidence" value="ECO:0007669"/>
    <property type="project" value="TreeGrafter"/>
</dbReference>
<dbReference type="GO" id="GO:0002161">
    <property type="term" value="F:aminoacyl-tRNA deacylase activity"/>
    <property type="evidence" value="ECO:0007669"/>
    <property type="project" value="InterPro"/>
</dbReference>
<dbReference type="GO" id="GO:0005524">
    <property type="term" value="F:ATP binding"/>
    <property type="evidence" value="ECO:0007669"/>
    <property type="project" value="UniProtKB-UniRule"/>
</dbReference>
<dbReference type="GO" id="GO:0004823">
    <property type="term" value="F:leucine-tRNA ligase activity"/>
    <property type="evidence" value="ECO:0007669"/>
    <property type="project" value="UniProtKB-UniRule"/>
</dbReference>
<dbReference type="GO" id="GO:0006429">
    <property type="term" value="P:leucyl-tRNA aminoacylation"/>
    <property type="evidence" value="ECO:0007669"/>
    <property type="project" value="UniProtKB-UniRule"/>
</dbReference>
<dbReference type="CDD" id="cd07958">
    <property type="entry name" value="Anticodon_Ia_Leu_BEm"/>
    <property type="match status" value="1"/>
</dbReference>
<dbReference type="CDD" id="cd00812">
    <property type="entry name" value="LeuRS_core"/>
    <property type="match status" value="1"/>
</dbReference>
<dbReference type="FunFam" id="1.10.730.10:FF:000002">
    <property type="entry name" value="Leucine--tRNA ligase"/>
    <property type="match status" value="2"/>
</dbReference>
<dbReference type="FunFam" id="2.20.28.290:FF:000001">
    <property type="entry name" value="Leucine--tRNA ligase"/>
    <property type="match status" value="1"/>
</dbReference>
<dbReference type="FunFam" id="3.10.20.590:FF:000001">
    <property type="entry name" value="Leucine--tRNA ligase"/>
    <property type="match status" value="1"/>
</dbReference>
<dbReference type="FunFam" id="3.40.50.620:FF:000003">
    <property type="entry name" value="Leucine--tRNA ligase"/>
    <property type="match status" value="1"/>
</dbReference>
<dbReference type="FunFam" id="3.40.50.620:FF:000124">
    <property type="entry name" value="Leucine--tRNA ligase"/>
    <property type="match status" value="1"/>
</dbReference>
<dbReference type="FunFam" id="3.90.740.10:FF:000012">
    <property type="entry name" value="Leucine--tRNA ligase"/>
    <property type="match status" value="1"/>
</dbReference>
<dbReference type="Gene3D" id="2.20.28.290">
    <property type="match status" value="1"/>
</dbReference>
<dbReference type="Gene3D" id="3.10.20.590">
    <property type="match status" value="1"/>
</dbReference>
<dbReference type="Gene3D" id="3.40.50.620">
    <property type="entry name" value="HUPs"/>
    <property type="match status" value="2"/>
</dbReference>
<dbReference type="Gene3D" id="1.10.730.10">
    <property type="entry name" value="Isoleucyl-tRNA Synthetase, Domain 1"/>
    <property type="match status" value="1"/>
</dbReference>
<dbReference type="HAMAP" id="MF_00049_B">
    <property type="entry name" value="Leu_tRNA_synth_B"/>
    <property type="match status" value="1"/>
</dbReference>
<dbReference type="InterPro" id="IPR001412">
    <property type="entry name" value="aa-tRNA-synth_I_CS"/>
</dbReference>
<dbReference type="InterPro" id="IPR002300">
    <property type="entry name" value="aa-tRNA-synth_Ia"/>
</dbReference>
<dbReference type="InterPro" id="IPR002302">
    <property type="entry name" value="Leu-tRNA-ligase"/>
</dbReference>
<dbReference type="InterPro" id="IPR025709">
    <property type="entry name" value="Leu_tRNA-synth_edit"/>
</dbReference>
<dbReference type="InterPro" id="IPR013155">
    <property type="entry name" value="M/V/L/I-tRNA-synth_anticd-bd"/>
</dbReference>
<dbReference type="InterPro" id="IPR015413">
    <property type="entry name" value="Methionyl/Leucyl_tRNA_Synth"/>
</dbReference>
<dbReference type="InterPro" id="IPR014729">
    <property type="entry name" value="Rossmann-like_a/b/a_fold"/>
</dbReference>
<dbReference type="InterPro" id="IPR009080">
    <property type="entry name" value="tRNAsynth_Ia_anticodon-bd"/>
</dbReference>
<dbReference type="InterPro" id="IPR009008">
    <property type="entry name" value="Val/Leu/Ile-tRNA-synth_edit"/>
</dbReference>
<dbReference type="NCBIfam" id="TIGR00396">
    <property type="entry name" value="leuS_bact"/>
    <property type="match status" value="1"/>
</dbReference>
<dbReference type="PANTHER" id="PTHR43740:SF2">
    <property type="entry name" value="LEUCINE--TRNA LIGASE, MITOCHONDRIAL"/>
    <property type="match status" value="1"/>
</dbReference>
<dbReference type="PANTHER" id="PTHR43740">
    <property type="entry name" value="LEUCYL-TRNA SYNTHETASE"/>
    <property type="match status" value="1"/>
</dbReference>
<dbReference type="Pfam" id="PF08264">
    <property type="entry name" value="Anticodon_1"/>
    <property type="match status" value="1"/>
</dbReference>
<dbReference type="Pfam" id="PF00133">
    <property type="entry name" value="tRNA-synt_1"/>
    <property type="match status" value="2"/>
</dbReference>
<dbReference type="Pfam" id="PF13603">
    <property type="entry name" value="tRNA-synt_1_2"/>
    <property type="match status" value="1"/>
</dbReference>
<dbReference type="Pfam" id="PF09334">
    <property type="entry name" value="tRNA-synt_1g"/>
    <property type="match status" value="1"/>
</dbReference>
<dbReference type="PRINTS" id="PR00985">
    <property type="entry name" value="TRNASYNTHLEU"/>
</dbReference>
<dbReference type="SUPFAM" id="SSF47323">
    <property type="entry name" value="Anticodon-binding domain of a subclass of class I aminoacyl-tRNA synthetases"/>
    <property type="match status" value="1"/>
</dbReference>
<dbReference type="SUPFAM" id="SSF52374">
    <property type="entry name" value="Nucleotidylyl transferase"/>
    <property type="match status" value="1"/>
</dbReference>
<dbReference type="SUPFAM" id="SSF50677">
    <property type="entry name" value="ValRS/IleRS/LeuRS editing domain"/>
    <property type="match status" value="1"/>
</dbReference>
<dbReference type="PROSITE" id="PS00178">
    <property type="entry name" value="AA_TRNA_LIGASE_I"/>
    <property type="match status" value="1"/>
</dbReference>
<feature type="chain" id="PRO_1000199203" description="Leucine--tRNA ligase">
    <location>
        <begin position="1"/>
        <end position="860"/>
    </location>
</feature>
<feature type="short sequence motif" description="'HIGH' region">
    <location>
        <begin position="42"/>
        <end position="52"/>
    </location>
</feature>
<feature type="short sequence motif" description="'KMSKS' region">
    <location>
        <begin position="619"/>
        <end position="623"/>
    </location>
</feature>
<feature type="binding site" evidence="1">
    <location>
        <position position="622"/>
    </location>
    <ligand>
        <name>ATP</name>
        <dbReference type="ChEBI" id="CHEBI:30616"/>
    </ligand>
</feature>
<sequence>MQEQYRPEEIESKVQLHWDEKRTFEVTEDESKEKYYCLSMLPYPSGRLHMGHVRNYTIGDVIARYQRMLGKNVLQPIGWDAFGLPAEGAAVKNNTAPAPWTYDNIAYMKNQLKMLGFGYDWSRELATCTPEYYRWEQKFFTELYKKGLVYKKTSAVNWCPNDQTVLANEQVIDGCCWRCDTKVERKEIPQWFIKITAYADELLNDLDKLDHWPDTVKTMQRNWIGRSEGVEITFNVKDYDNTLTVYTTRPDTFMGCTYLAVAAGHPLAQKAAENNPELAAFIDECRNTKVAEAEMATMEKKGVDTGFKAVHPLTGEEIPVWAANFVLMEYGTGAVMAVPGHDQRDYEFASKYGLNIKPVILAADGSEPDLSQQALTEKGVLFNSGEFNGLDHEAAFNAIADKLTEMGVGERKVNYRLRDWGVSRQRYWGAPIPMVTLEDGTVMPTPDDQLPVILPEDVVMDGITSPIKADPEWAKTTVNGMPALRETDTFDTFMESSWYYARYTCPEYKEGMLDSKAANYWLPVDIYIGGIEHAIMHLLYFRFFHKLMRDAGMVNSDEPAKQLLCQGMVLADAFYYVGENGERNWVSPVDAIVERDEKGRIVKAKDAAGHELVYTGMSKMSKSKNNGIDPQVMVERYGADTVRLFMMFASPADMTLEWQESGVEGANRFLKRVWKLVYEHTAKGDVAALNVDALTEDQKALRRDVHKTIAKVTDDIGRRQTFNTAIAAIMELMNKLAKAPTDGEQDRALMQEALLAVVRMLNPFTPHICFTLWQELKGEGDIDNAPWPVADEKAMVEDSTLVVVQVNGKVRAKITVPVDATEEQVRERAGQEHLVAKYLDGVTVRKVIYVPGKLLNLVVG</sequence>
<proteinExistence type="inferred from homology"/>
<organism>
    <name type="scientific">Escherichia coli O45:K1 (strain S88 / ExPEC)</name>
    <dbReference type="NCBI Taxonomy" id="585035"/>
    <lineage>
        <taxon>Bacteria</taxon>
        <taxon>Pseudomonadati</taxon>
        <taxon>Pseudomonadota</taxon>
        <taxon>Gammaproteobacteria</taxon>
        <taxon>Enterobacterales</taxon>
        <taxon>Enterobacteriaceae</taxon>
        <taxon>Escherichia</taxon>
    </lineage>
</organism>
<keyword id="KW-0030">Aminoacyl-tRNA synthetase</keyword>
<keyword id="KW-0067">ATP-binding</keyword>
<keyword id="KW-0963">Cytoplasm</keyword>
<keyword id="KW-0436">Ligase</keyword>
<keyword id="KW-0547">Nucleotide-binding</keyword>
<keyword id="KW-0648">Protein biosynthesis</keyword>
<keyword id="KW-1185">Reference proteome</keyword>
<protein>
    <recommendedName>
        <fullName evidence="1">Leucine--tRNA ligase</fullName>
        <ecNumber evidence="1">6.1.1.4</ecNumber>
    </recommendedName>
    <alternativeName>
        <fullName evidence="1">Leucyl-tRNA synthetase</fullName>
        <shortName evidence="1">LeuRS</shortName>
    </alternativeName>
</protein>
<accession>B7MFR5</accession>